<gene>
    <name type="primary">hflC</name>
    <name type="ordered locus">BB_0204</name>
</gene>
<protein>
    <recommendedName>
        <fullName>Protein HflC</fullName>
    </recommendedName>
</protein>
<dbReference type="EMBL" id="AE000783">
    <property type="protein sequence ID" value="AAC66585.2"/>
    <property type="status" value="ALT_INIT"/>
    <property type="molecule type" value="Genomic_DNA"/>
</dbReference>
<dbReference type="PIR" id="D70125">
    <property type="entry name" value="D70125"/>
</dbReference>
<dbReference type="RefSeq" id="NP_212338.2">
    <property type="nucleotide sequence ID" value="NC_001318.1"/>
</dbReference>
<dbReference type="RefSeq" id="WP_002655940.1">
    <property type="nucleotide sequence ID" value="NC_001318.1"/>
</dbReference>
<dbReference type="SMR" id="O51222"/>
<dbReference type="STRING" id="224326.BB_0204"/>
<dbReference type="MEROPS" id="I87.001"/>
<dbReference type="PaxDb" id="224326-BB_0204"/>
<dbReference type="EnsemblBacteria" id="AAC66585">
    <property type="protein sequence ID" value="AAC66585"/>
    <property type="gene ID" value="BB_0204"/>
</dbReference>
<dbReference type="KEGG" id="bbu:BB_0204"/>
<dbReference type="PATRIC" id="fig|224326.49.peg.601"/>
<dbReference type="HOGENOM" id="CLU_059167_1_1_12"/>
<dbReference type="OrthoDB" id="9809197at2"/>
<dbReference type="Proteomes" id="UP000001807">
    <property type="component" value="Chromosome"/>
</dbReference>
<dbReference type="GO" id="GO:0016020">
    <property type="term" value="C:membrane"/>
    <property type="evidence" value="ECO:0007669"/>
    <property type="project" value="UniProtKB-SubCell"/>
</dbReference>
<dbReference type="CDD" id="cd03405">
    <property type="entry name" value="SPFH_HflC"/>
    <property type="match status" value="1"/>
</dbReference>
<dbReference type="Gene3D" id="3.30.479.30">
    <property type="entry name" value="Band 7 domain"/>
    <property type="match status" value="1"/>
</dbReference>
<dbReference type="InterPro" id="IPR001107">
    <property type="entry name" value="Band_7"/>
</dbReference>
<dbReference type="InterPro" id="IPR036013">
    <property type="entry name" value="Band_7/SPFH_dom_sf"/>
</dbReference>
<dbReference type="InterPro" id="IPR010200">
    <property type="entry name" value="HflC"/>
</dbReference>
<dbReference type="NCBIfam" id="TIGR01932">
    <property type="entry name" value="hflC"/>
    <property type="match status" value="1"/>
</dbReference>
<dbReference type="PANTHER" id="PTHR42911">
    <property type="entry name" value="MODULATOR OF FTSH PROTEASE HFLC"/>
    <property type="match status" value="1"/>
</dbReference>
<dbReference type="PANTHER" id="PTHR42911:SF1">
    <property type="entry name" value="MODULATOR OF FTSH PROTEASE HFLC"/>
    <property type="match status" value="1"/>
</dbReference>
<dbReference type="Pfam" id="PF01145">
    <property type="entry name" value="Band_7"/>
    <property type="match status" value="1"/>
</dbReference>
<dbReference type="PIRSF" id="PIRSF005651">
    <property type="entry name" value="HflC"/>
    <property type="match status" value="1"/>
</dbReference>
<dbReference type="SMART" id="SM00244">
    <property type="entry name" value="PHB"/>
    <property type="match status" value="1"/>
</dbReference>
<dbReference type="SUPFAM" id="SSF117892">
    <property type="entry name" value="Band 7/SPFH domain"/>
    <property type="match status" value="1"/>
</dbReference>
<proteinExistence type="inferred from homology"/>
<sequence length="323" mass="37194">MKFIINLLLSTIKIITFTVIVCLTILSIFQPIYILKENEISITTRLGKIQRTENLAGLKYKIPLIENVQIFPKIILRWDGEPQRIPTGGEEKQLIWIDTTARWKIADINKFYTTIKTMSRAYVRIDAAIEPAVRGVIAKYPLLEIIRSSNDPIQRLSNGILTPQETKINGIYKITKGRKIIEKEIIRIANNNTKDIGIEIVDVLIRKVTYDPSLIESVNNRMISERQQIAEEQRSIGLAEKTEILGSIEKEKLKILSEAKATAAKIKAEGDREAAKIYSNAYGKNIEFYKFWQALESYKAVLKDKRKIFSTDMDFFQYLHKRN</sequence>
<evidence type="ECO:0000250" key="1"/>
<evidence type="ECO:0000255" key="2"/>
<evidence type="ECO:0000305" key="3"/>
<organism>
    <name type="scientific">Borreliella burgdorferi (strain ATCC 35210 / DSM 4680 / CIP 102532 / B31)</name>
    <name type="common">Borrelia burgdorferi</name>
    <dbReference type="NCBI Taxonomy" id="224326"/>
    <lineage>
        <taxon>Bacteria</taxon>
        <taxon>Pseudomonadati</taxon>
        <taxon>Spirochaetota</taxon>
        <taxon>Spirochaetia</taxon>
        <taxon>Spirochaetales</taxon>
        <taxon>Borreliaceae</taxon>
        <taxon>Borreliella</taxon>
    </lineage>
</organism>
<reference key="1">
    <citation type="journal article" date="1997" name="Nature">
        <title>Genomic sequence of a Lyme disease spirochaete, Borrelia burgdorferi.</title>
        <authorList>
            <person name="Fraser C.M."/>
            <person name="Casjens S."/>
            <person name="Huang W.M."/>
            <person name="Sutton G.G."/>
            <person name="Clayton R.A."/>
            <person name="Lathigra R."/>
            <person name="White O."/>
            <person name="Ketchum K.A."/>
            <person name="Dodson R.J."/>
            <person name="Hickey E.K."/>
            <person name="Gwinn M.L."/>
            <person name="Dougherty B.A."/>
            <person name="Tomb J.-F."/>
            <person name="Fleischmann R.D."/>
            <person name="Richardson D.L."/>
            <person name="Peterson J.D."/>
            <person name="Kerlavage A.R."/>
            <person name="Quackenbush J."/>
            <person name="Salzberg S.L."/>
            <person name="Hanson M."/>
            <person name="van Vugt R."/>
            <person name="Palmer N."/>
            <person name="Adams M.D."/>
            <person name="Gocayne J.D."/>
            <person name="Weidman J.F."/>
            <person name="Utterback T.R."/>
            <person name="Watthey L."/>
            <person name="McDonald L.A."/>
            <person name="Artiach P."/>
            <person name="Bowman C."/>
            <person name="Garland S.A."/>
            <person name="Fujii C."/>
            <person name="Cotton M.D."/>
            <person name="Horst K."/>
            <person name="Roberts K.M."/>
            <person name="Hatch B."/>
            <person name="Smith H.O."/>
            <person name="Venter J.C."/>
        </authorList>
    </citation>
    <scope>NUCLEOTIDE SEQUENCE [LARGE SCALE GENOMIC DNA]</scope>
    <source>
        <strain>ATCC 35210 / DSM 4680 / CIP 102532 / B31</strain>
    </source>
</reference>
<name>HFLC_BORBU</name>
<feature type="chain" id="PRO_0000094069" description="Protein HflC">
    <location>
        <begin position="1"/>
        <end position="323"/>
    </location>
</feature>
<feature type="transmembrane region" description="Helical" evidence="2">
    <location>
        <begin position="14"/>
        <end position="34"/>
    </location>
</feature>
<accession>O51222</accession>
<comment type="function">
    <text evidence="1">HflC and HflK could regulate a protease.</text>
</comment>
<comment type="subunit">
    <text evidence="1">HflC and HflK may interact to form a multimeric complex.</text>
</comment>
<comment type="subcellular location">
    <subcellularLocation>
        <location evidence="3">Membrane</location>
        <topology evidence="3">Single-pass membrane protein</topology>
    </subcellularLocation>
</comment>
<comment type="similarity">
    <text evidence="3">Belongs to the band 7/mec-2 family. HflC subfamily.</text>
</comment>
<comment type="sequence caution" evidence="3">
    <conflict type="erroneous initiation">
        <sequence resource="EMBL-CDS" id="AAC66585"/>
    </conflict>
    <text>Truncated N-terminus.</text>
</comment>
<keyword id="KW-0472">Membrane</keyword>
<keyword id="KW-1185">Reference proteome</keyword>
<keyword id="KW-0812">Transmembrane</keyword>
<keyword id="KW-1133">Transmembrane helix</keyword>